<proteinExistence type="evidence at protein level"/>
<comment type="function">
    <text evidence="2">The master regulator for adhesive curli fimbriae expression; necessary for transcription of the csgBAC/ymdA operon. Plays a positive role in biofilm formation. May have the capability to respond to starvation and/or high cell density by activating csgBA transcription. Low-level constitutive expression confers an adherent curli fimbriae-expressing phenotype, up-regulates 10 genes and down-regulates 14 others.</text>
</comment>
<comment type="interaction">
    <interactant intactId="EBI-555538">
        <id>P52106</id>
    </interactant>
    <interactant intactId="EBI-555538">
        <id>P52106</id>
        <label>csgD</label>
    </interactant>
    <organismsDiffer>false</organismsDiffer>
    <experiments>3</experiments>
</comment>
<comment type="subcellular location">
    <subcellularLocation>
        <location evidence="5">Cell inner membrane</location>
        <topology evidence="5">Peripheral membrane protein</topology>
    </subcellularLocation>
    <text>In experiments done with low-level constitutively expressed protein.</text>
</comment>
<comment type="induction">
    <text evidence="3 4">Regulation is very complex. Strongly induced at 28 degrees Celsius (at protein level), transcription regulation requires c-di-GMP, although the mechanism is currently unknown. c-di-GMP levels are stimulated by the diguanylate cyclase DgcM and repressed by the c-di-GMP phosphodiesterase PdeR (YciR) (PubMed:17010156). Transcription directly repressed by MqsA, and indirectly repressed by MqsA via MqsA's repression of rpoS (PubMed:24212724).</text>
</comment>
<comment type="disruption phenotype">
    <text evidence="4">No curli production.</text>
</comment>
<gene>
    <name type="primary">csgD</name>
    <name type="ordered locus">b1040</name>
    <name type="ordered locus">JW1023</name>
</gene>
<evidence type="ECO:0000255" key="1">
    <source>
        <dbReference type="PROSITE-ProRule" id="PRU00411"/>
    </source>
</evidence>
<evidence type="ECO:0000269" key="2">
    <source>
    </source>
</evidence>
<evidence type="ECO:0000269" key="3">
    <source>
    </source>
</evidence>
<evidence type="ECO:0000269" key="4">
    <source>
    </source>
</evidence>
<evidence type="ECO:0000305" key="5">
    <source>
    </source>
</evidence>
<organism>
    <name type="scientific">Escherichia coli (strain K12)</name>
    <dbReference type="NCBI Taxonomy" id="83333"/>
    <lineage>
        <taxon>Bacteria</taxon>
        <taxon>Pseudomonadati</taxon>
        <taxon>Pseudomonadota</taxon>
        <taxon>Gammaproteobacteria</taxon>
        <taxon>Enterobacterales</taxon>
        <taxon>Enterobacteriaceae</taxon>
        <taxon>Escherichia</taxon>
    </lineage>
</organism>
<keyword id="KW-0997">Cell inner membrane</keyword>
<keyword id="KW-1003">Cell membrane</keyword>
<keyword id="KW-0238">DNA-binding</keyword>
<keyword id="KW-0472">Membrane</keyword>
<keyword id="KW-1185">Reference proteome</keyword>
<keyword id="KW-0804">Transcription</keyword>
<keyword id="KW-0805">Transcription regulation</keyword>
<dbReference type="EMBL" id="X90754">
    <property type="protein sequence ID" value="CAA62280.1"/>
    <property type="molecule type" value="Genomic_DNA"/>
</dbReference>
<dbReference type="EMBL" id="U00096">
    <property type="protein sequence ID" value="AAC74124.1"/>
    <property type="molecule type" value="Genomic_DNA"/>
</dbReference>
<dbReference type="EMBL" id="AP009048">
    <property type="protein sequence ID" value="BAA35830.1"/>
    <property type="molecule type" value="Genomic_DNA"/>
</dbReference>
<dbReference type="EMBL" id="AH007429">
    <property type="protein sequence ID" value="AAD16025.1"/>
    <property type="molecule type" value="Genomic_DNA"/>
</dbReference>
<dbReference type="PIR" id="S70786">
    <property type="entry name" value="S70786"/>
</dbReference>
<dbReference type="RefSeq" id="NP_415558.1">
    <property type="nucleotide sequence ID" value="NC_000913.3"/>
</dbReference>
<dbReference type="RefSeq" id="WP_000481509.1">
    <property type="nucleotide sequence ID" value="NZ_SSZK01000058.1"/>
</dbReference>
<dbReference type="SMR" id="P52106"/>
<dbReference type="BioGRID" id="4260064">
    <property type="interactions" value="127"/>
</dbReference>
<dbReference type="BioGRID" id="853359">
    <property type="interactions" value="1"/>
</dbReference>
<dbReference type="DIP" id="DIP-9328N"/>
<dbReference type="FunCoup" id="P52106">
    <property type="interactions" value="143"/>
</dbReference>
<dbReference type="IntAct" id="P52106">
    <property type="interactions" value="2"/>
</dbReference>
<dbReference type="STRING" id="511145.b1040"/>
<dbReference type="jPOST" id="P52106"/>
<dbReference type="PaxDb" id="511145-b1040"/>
<dbReference type="EnsemblBacteria" id="AAC74124">
    <property type="protein sequence ID" value="AAC74124"/>
    <property type="gene ID" value="b1040"/>
</dbReference>
<dbReference type="GeneID" id="949119"/>
<dbReference type="KEGG" id="ecj:JW1023"/>
<dbReference type="KEGG" id="eco:b1040"/>
<dbReference type="KEGG" id="ecoc:C3026_06330"/>
<dbReference type="PATRIC" id="fig|1411691.4.peg.1231"/>
<dbReference type="EchoBASE" id="EB3186"/>
<dbReference type="eggNOG" id="COG2197">
    <property type="taxonomic scope" value="Bacteria"/>
</dbReference>
<dbReference type="HOGENOM" id="CLU_000445_90_7_6"/>
<dbReference type="InParanoid" id="P52106"/>
<dbReference type="OMA" id="PSYHELI"/>
<dbReference type="OrthoDB" id="561214at2"/>
<dbReference type="PhylomeDB" id="P52106"/>
<dbReference type="BioCyc" id="EcoCyc:PD01379"/>
<dbReference type="PRO" id="PR:P52106"/>
<dbReference type="Proteomes" id="UP000000625">
    <property type="component" value="Chromosome"/>
</dbReference>
<dbReference type="CollecTF" id="EXPREG_00000b00"/>
<dbReference type="GO" id="GO:0005886">
    <property type="term" value="C:plasma membrane"/>
    <property type="evidence" value="ECO:0007669"/>
    <property type="project" value="UniProtKB-SubCell"/>
</dbReference>
<dbReference type="GO" id="GO:0032993">
    <property type="term" value="C:protein-DNA complex"/>
    <property type="evidence" value="ECO:0000315"/>
    <property type="project" value="CollecTF"/>
</dbReference>
<dbReference type="GO" id="GO:0000987">
    <property type="term" value="F:cis-regulatory region sequence-specific DNA binding"/>
    <property type="evidence" value="ECO:0000314"/>
    <property type="project" value="EcoCyc"/>
</dbReference>
<dbReference type="GO" id="GO:0001216">
    <property type="term" value="F:DNA-binding transcription activator activity"/>
    <property type="evidence" value="ECO:0000315"/>
    <property type="project" value="CollecTF"/>
</dbReference>
<dbReference type="GO" id="GO:0001217">
    <property type="term" value="F:DNA-binding transcription repressor activity"/>
    <property type="evidence" value="ECO:0000353"/>
    <property type="project" value="CollecTF"/>
</dbReference>
<dbReference type="GO" id="GO:0042802">
    <property type="term" value="F:identical protein binding"/>
    <property type="evidence" value="ECO:0000353"/>
    <property type="project" value="IntAct"/>
</dbReference>
<dbReference type="GO" id="GO:0000976">
    <property type="term" value="F:transcription cis-regulatory region binding"/>
    <property type="evidence" value="ECO:0000315"/>
    <property type="project" value="CollecTF"/>
</dbReference>
<dbReference type="GO" id="GO:2000144">
    <property type="term" value="P:positive regulation of DNA-templated transcription initiation"/>
    <property type="evidence" value="ECO:0000315"/>
    <property type="project" value="EcoCyc"/>
</dbReference>
<dbReference type="GO" id="GO:1900190">
    <property type="term" value="P:regulation of single-species biofilm formation"/>
    <property type="evidence" value="ECO:0000314"/>
    <property type="project" value="EcoCyc"/>
</dbReference>
<dbReference type="CDD" id="cd06170">
    <property type="entry name" value="LuxR_C_like"/>
    <property type="match status" value="1"/>
</dbReference>
<dbReference type="FunFam" id="1.10.10.10:FF:000153">
    <property type="entry name" value="LuxR family transcriptional regulator"/>
    <property type="match status" value="1"/>
</dbReference>
<dbReference type="Gene3D" id="3.40.50.2300">
    <property type="match status" value="1"/>
</dbReference>
<dbReference type="Gene3D" id="1.10.10.10">
    <property type="entry name" value="Winged helix-like DNA-binding domain superfamily/Winged helix DNA-binding domain"/>
    <property type="match status" value="1"/>
</dbReference>
<dbReference type="InterPro" id="IPR049151">
    <property type="entry name" value="CsgD-like_REC"/>
</dbReference>
<dbReference type="InterPro" id="IPR016032">
    <property type="entry name" value="Sig_transdc_resp-reg_C-effctor"/>
</dbReference>
<dbReference type="InterPro" id="IPR000792">
    <property type="entry name" value="Tscrpt_reg_LuxR_C"/>
</dbReference>
<dbReference type="InterPro" id="IPR036388">
    <property type="entry name" value="WH-like_DNA-bd_sf"/>
</dbReference>
<dbReference type="NCBIfam" id="NF007505">
    <property type="entry name" value="PRK10100.1"/>
    <property type="match status" value="1"/>
</dbReference>
<dbReference type="PANTHER" id="PTHR44688">
    <property type="entry name" value="DNA-BINDING TRANSCRIPTIONAL ACTIVATOR DEVR_DOSR"/>
    <property type="match status" value="1"/>
</dbReference>
<dbReference type="PANTHER" id="PTHR44688:SF16">
    <property type="entry name" value="DNA-BINDING TRANSCRIPTIONAL ACTIVATOR DEVR_DOSR"/>
    <property type="match status" value="1"/>
</dbReference>
<dbReference type="Pfam" id="PF00196">
    <property type="entry name" value="GerE"/>
    <property type="match status" value="1"/>
</dbReference>
<dbReference type="Pfam" id="PF21155">
    <property type="entry name" value="VpsT-like_REC"/>
    <property type="match status" value="1"/>
</dbReference>
<dbReference type="PRINTS" id="PR00038">
    <property type="entry name" value="HTHLUXR"/>
</dbReference>
<dbReference type="SMART" id="SM00421">
    <property type="entry name" value="HTH_LUXR"/>
    <property type="match status" value="1"/>
</dbReference>
<dbReference type="SUPFAM" id="SSF46894">
    <property type="entry name" value="C-terminal effector domain of the bipartite response regulators"/>
    <property type="match status" value="1"/>
</dbReference>
<dbReference type="PROSITE" id="PS00622">
    <property type="entry name" value="HTH_LUXR_1"/>
    <property type="match status" value="1"/>
</dbReference>
<dbReference type="PROSITE" id="PS50043">
    <property type="entry name" value="HTH_LUXR_2"/>
    <property type="match status" value="1"/>
</dbReference>
<protein>
    <recommendedName>
        <fullName>CsgBAC operon transcriptional regulatory protein</fullName>
    </recommendedName>
</protein>
<feature type="chain" id="PRO_0000184143" description="CsgBAC operon transcriptional regulatory protein">
    <location>
        <begin position="1"/>
        <end position="216"/>
    </location>
</feature>
<feature type="domain" description="HTH luxR-type" evidence="1">
    <location>
        <begin position="149"/>
        <end position="214"/>
    </location>
</feature>
<feature type="DNA-binding region" description="H-T-H motif" evidence="1">
    <location>
        <begin position="173"/>
        <end position="192"/>
    </location>
</feature>
<sequence length="216" mass="24935">MFNEVHSIHGHTLLLITKSSLQATALLQHLKQSLAITGKLHNIQRSLDDISSGSIILLDMMEADKKLIHYWQDTLSRKNNNIKILLLNTPEDYPYRDIENWPHINGVFYSMEDQERVVNGLQGVLRGECYFTQKLASYLITHSGNYRYNSTESALLTHREKEILNKLRIGASNNEIARSLFISENTVKTHLYNLFKKIAVKNRTQAVSWANDNLRR</sequence>
<name>CSGD_ECOLI</name>
<accession>P52106</accession>
<reference key="1">
    <citation type="journal article" date="1995" name="Mol. Microbiol.">
        <title>Expression of two csg operons is required for production of fibronectin- and congo red-binding curli polymers in Escherichia coli K-12.</title>
        <authorList>
            <person name="Hammar M."/>
            <person name="Arnqvist A."/>
            <person name="Bian Z."/>
            <person name="Olsen A."/>
            <person name="Normark S."/>
        </authorList>
    </citation>
    <scope>NUCLEOTIDE SEQUENCE [GENOMIC DNA]</scope>
    <source>
        <strain>K12 / MC4100 / ATCC 35695 / DSM 6574</strain>
    </source>
</reference>
<reference key="2">
    <citation type="journal article" date="1996" name="DNA Res.">
        <title>A 718-kb DNA sequence of the Escherichia coli K-12 genome corresponding to the 12.7-28.0 min region on the linkage map.</title>
        <authorList>
            <person name="Oshima T."/>
            <person name="Aiba H."/>
            <person name="Baba T."/>
            <person name="Fujita K."/>
            <person name="Hayashi K."/>
            <person name="Honjo A."/>
            <person name="Ikemoto K."/>
            <person name="Inada T."/>
            <person name="Itoh T."/>
            <person name="Kajihara M."/>
            <person name="Kanai K."/>
            <person name="Kashimoto K."/>
            <person name="Kimura S."/>
            <person name="Kitagawa M."/>
            <person name="Makino K."/>
            <person name="Masuda S."/>
            <person name="Miki T."/>
            <person name="Mizobuchi K."/>
            <person name="Mori H."/>
            <person name="Motomura K."/>
            <person name="Nakamura Y."/>
            <person name="Nashimoto H."/>
            <person name="Nishio Y."/>
            <person name="Saito N."/>
            <person name="Sampei G."/>
            <person name="Seki Y."/>
            <person name="Tagami H."/>
            <person name="Takemoto K."/>
            <person name="Wada C."/>
            <person name="Yamamoto Y."/>
            <person name="Yano M."/>
            <person name="Horiuchi T."/>
        </authorList>
    </citation>
    <scope>NUCLEOTIDE SEQUENCE [LARGE SCALE GENOMIC DNA]</scope>
    <source>
        <strain>K12 / W3110 / ATCC 27325 / DSM 5911</strain>
    </source>
</reference>
<reference key="3">
    <citation type="journal article" date="1997" name="Science">
        <title>The complete genome sequence of Escherichia coli K-12.</title>
        <authorList>
            <person name="Blattner F.R."/>
            <person name="Plunkett G. III"/>
            <person name="Bloch C.A."/>
            <person name="Perna N.T."/>
            <person name="Burland V."/>
            <person name="Riley M."/>
            <person name="Collado-Vides J."/>
            <person name="Glasner J.D."/>
            <person name="Rode C.K."/>
            <person name="Mayhew G.F."/>
            <person name="Gregor J."/>
            <person name="Davis N.W."/>
            <person name="Kirkpatrick H.A."/>
            <person name="Goeden M.A."/>
            <person name="Rose D.J."/>
            <person name="Mau B."/>
            <person name="Shao Y."/>
        </authorList>
    </citation>
    <scope>NUCLEOTIDE SEQUENCE [LARGE SCALE GENOMIC DNA]</scope>
    <source>
        <strain>K12 / MG1655 / ATCC 47076</strain>
    </source>
</reference>
<reference key="4">
    <citation type="journal article" date="2006" name="Mol. Syst. Biol.">
        <title>Highly accurate genome sequences of Escherichia coli K-12 strains MG1655 and W3110.</title>
        <authorList>
            <person name="Hayashi K."/>
            <person name="Morooka N."/>
            <person name="Yamamoto Y."/>
            <person name="Fujita K."/>
            <person name="Isono K."/>
            <person name="Choi S."/>
            <person name="Ohtsubo E."/>
            <person name="Baba T."/>
            <person name="Wanner B.L."/>
            <person name="Mori H."/>
            <person name="Horiuchi T."/>
        </authorList>
    </citation>
    <scope>NUCLEOTIDE SEQUENCE [LARGE SCALE GENOMIC DNA]</scope>
    <source>
        <strain>K12 / W3110 / ATCC 27325 / DSM 5911</strain>
    </source>
</reference>
<reference key="5">
    <citation type="submission" date="1998-08" db="EMBL/GenBank/DDBJ databases">
        <title>Avian E. coli serotype O78 csg cluster.</title>
        <authorList>
            <person name="Seijffers R."/>
            <person name="Gophna U."/>
            <person name="Ron E.Z."/>
        </authorList>
    </citation>
    <scope>NUCLEOTIDE SEQUENCE [GENOMIC DNA] OF 134-216</scope>
    <source>
        <strain>O78</strain>
    </source>
</reference>
<reference key="6">
    <citation type="journal article" date="2006" name="J. Bacteriol.">
        <title>Gene expression regulation by the Curli activator CsgD protein: modulation of cellulose biosynthesis and control of negative determinants for microbial adhesion.</title>
        <authorList>
            <person name="Brombacher E."/>
            <person name="Baratto A."/>
            <person name="Dorel C."/>
            <person name="Landini P."/>
        </authorList>
    </citation>
    <scope>FUNCTION</scope>
    <scope>IDENTIFICATION BY MASS SPECTROMETRY</scope>
    <scope>REGULATION TARGETS</scope>
    <scope>SUBCELLULAR LOCATION</scope>
    <source>
        <strain>K12 / MG1655 / PHL565</strain>
    </source>
</reference>
<reference key="7">
    <citation type="journal article" date="2006" name="Mol. Microbiol.">
        <title>Cyclic-di-GMP-mediated signalling within the sigma network of Escherichia coli.</title>
        <authorList>
            <person name="Weber H."/>
            <person name="Pesavento C."/>
            <person name="Possling A."/>
            <person name="Tischendorf G."/>
            <person name="Hengge R."/>
        </authorList>
    </citation>
    <scope>INDUCTION</scope>
    <source>
        <strain>K12 / MC4100</strain>
    </source>
</reference>
<reference key="8">
    <citation type="journal article" date="2013" name="Sci. Rep.">
        <title>Antitoxin MqsA represses curli formation through the master biofilm regulator CsgD.</title>
        <authorList>
            <person name="Soo V.W."/>
            <person name="Wood T.K."/>
        </authorList>
    </citation>
    <scope>INDUCTION</scope>
    <scope>DISRUPTION PHENOTYPE</scope>
    <source>
        <strain>K12 / BW25113</strain>
    </source>
</reference>